<gene>
    <name evidence="1" type="primary">rbcL</name>
</gene>
<accession>P28442</accession>
<geneLocation type="chloroplast"/>
<name>RBL_PLAVR</name>
<keyword id="KW-0113">Calvin cycle</keyword>
<keyword id="KW-0120">Carbon dioxide fixation</keyword>
<keyword id="KW-0150">Chloroplast</keyword>
<keyword id="KW-1015">Disulfide bond</keyword>
<keyword id="KW-0456">Lyase</keyword>
<keyword id="KW-0460">Magnesium</keyword>
<keyword id="KW-0479">Metal-binding</keyword>
<keyword id="KW-0488">Methylation</keyword>
<keyword id="KW-0503">Monooxygenase</keyword>
<keyword id="KW-0560">Oxidoreductase</keyword>
<keyword id="KW-0601">Photorespiration</keyword>
<keyword id="KW-0602">Photosynthesis</keyword>
<keyword id="KW-0934">Plastid</keyword>
<dbReference type="EC" id="4.1.1.39" evidence="1"/>
<dbReference type="EMBL" id="L01944">
    <property type="protein sequence ID" value="AAA84568.2"/>
    <property type="molecule type" value="Genomic_DNA"/>
</dbReference>
<dbReference type="SMR" id="P28442"/>
<dbReference type="GO" id="GO:0009507">
    <property type="term" value="C:chloroplast"/>
    <property type="evidence" value="ECO:0007669"/>
    <property type="project" value="UniProtKB-SubCell"/>
</dbReference>
<dbReference type="GO" id="GO:0000287">
    <property type="term" value="F:magnesium ion binding"/>
    <property type="evidence" value="ECO:0007669"/>
    <property type="project" value="InterPro"/>
</dbReference>
<dbReference type="GO" id="GO:0004497">
    <property type="term" value="F:monooxygenase activity"/>
    <property type="evidence" value="ECO:0007669"/>
    <property type="project" value="UniProtKB-KW"/>
</dbReference>
<dbReference type="GO" id="GO:0016984">
    <property type="term" value="F:ribulose-bisphosphate carboxylase activity"/>
    <property type="evidence" value="ECO:0007669"/>
    <property type="project" value="UniProtKB-EC"/>
</dbReference>
<dbReference type="GO" id="GO:0009853">
    <property type="term" value="P:photorespiration"/>
    <property type="evidence" value="ECO:0007669"/>
    <property type="project" value="UniProtKB-KW"/>
</dbReference>
<dbReference type="GO" id="GO:0019253">
    <property type="term" value="P:reductive pentose-phosphate cycle"/>
    <property type="evidence" value="ECO:0007669"/>
    <property type="project" value="UniProtKB-KW"/>
</dbReference>
<dbReference type="CDD" id="cd08212">
    <property type="entry name" value="RuBisCO_large_I"/>
    <property type="match status" value="1"/>
</dbReference>
<dbReference type="FunFam" id="3.20.20.110:FF:000001">
    <property type="entry name" value="Ribulose bisphosphate carboxylase large chain"/>
    <property type="match status" value="1"/>
</dbReference>
<dbReference type="FunFam" id="3.30.70.150:FF:000001">
    <property type="entry name" value="Ribulose bisphosphate carboxylase large chain"/>
    <property type="match status" value="1"/>
</dbReference>
<dbReference type="Gene3D" id="3.20.20.110">
    <property type="entry name" value="Ribulose bisphosphate carboxylase, large subunit, C-terminal domain"/>
    <property type="match status" value="1"/>
</dbReference>
<dbReference type="Gene3D" id="3.30.70.150">
    <property type="entry name" value="RuBisCO large subunit, N-terminal domain"/>
    <property type="match status" value="1"/>
</dbReference>
<dbReference type="HAMAP" id="MF_01338">
    <property type="entry name" value="RuBisCO_L_type1"/>
    <property type="match status" value="1"/>
</dbReference>
<dbReference type="InterPro" id="IPR033966">
    <property type="entry name" value="RuBisCO"/>
</dbReference>
<dbReference type="InterPro" id="IPR020878">
    <property type="entry name" value="RuBisCo_large_chain_AS"/>
</dbReference>
<dbReference type="InterPro" id="IPR000685">
    <property type="entry name" value="RuBisCO_lsu_C"/>
</dbReference>
<dbReference type="InterPro" id="IPR036376">
    <property type="entry name" value="RuBisCO_lsu_C_sf"/>
</dbReference>
<dbReference type="InterPro" id="IPR017443">
    <property type="entry name" value="RuBisCO_lsu_fd_N"/>
</dbReference>
<dbReference type="InterPro" id="IPR036422">
    <property type="entry name" value="RuBisCO_lsu_N_sf"/>
</dbReference>
<dbReference type="InterPro" id="IPR020888">
    <property type="entry name" value="RuBisCO_lsuI"/>
</dbReference>
<dbReference type="NCBIfam" id="NF003252">
    <property type="entry name" value="PRK04208.1"/>
    <property type="match status" value="1"/>
</dbReference>
<dbReference type="PANTHER" id="PTHR42704">
    <property type="entry name" value="RIBULOSE BISPHOSPHATE CARBOXYLASE"/>
    <property type="match status" value="1"/>
</dbReference>
<dbReference type="PANTHER" id="PTHR42704:SF16">
    <property type="entry name" value="RIBULOSE BISPHOSPHATE CARBOXYLASE LARGE CHAIN"/>
    <property type="match status" value="1"/>
</dbReference>
<dbReference type="Pfam" id="PF00016">
    <property type="entry name" value="RuBisCO_large"/>
    <property type="match status" value="1"/>
</dbReference>
<dbReference type="Pfam" id="PF02788">
    <property type="entry name" value="RuBisCO_large_N"/>
    <property type="match status" value="1"/>
</dbReference>
<dbReference type="SFLD" id="SFLDG01052">
    <property type="entry name" value="RuBisCO"/>
    <property type="match status" value="1"/>
</dbReference>
<dbReference type="SFLD" id="SFLDS00014">
    <property type="entry name" value="RuBisCO"/>
    <property type="match status" value="1"/>
</dbReference>
<dbReference type="SFLD" id="SFLDG00301">
    <property type="entry name" value="RuBisCO-like_proteins"/>
    <property type="match status" value="1"/>
</dbReference>
<dbReference type="SUPFAM" id="SSF51649">
    <property type="entry name" value="RuBisCo, C-terminal domain"/>
    <property type="match status" value="1"/>
</dbReference>
<dbReference type="SUPFAM" id="SSF54966">
    <property type="entry name" value="RuBisCO, large subunit, small (N-terminal) domain"/>
    <property type="match status" value="1"/>
</dbReference>
<dbReference type="PROSITE" id="PS00157">
    <property type="entry name" value="RUBISCO_LARGE"/>
    <property type="match status" value="1"/>
</dbReference>
<feature type="chain" id="PRO_0000062566" description="Ribulose bisphosphate carboxylase large chain">
    <location>
        <begin position="1" status="less than"/>
        <end position="465"/>
    </location>
</feature>
<feature type="active site" description="Proton acceptor" evidence="1">
    <location>
        <position position="165"/>
    </location>
</feature>
<feature type="active site" description="Proton acceptor" evidence="1">
    <location>
        <position position="284"/>
    </location>
</feature>
<feature type="binding site" description="in homodimeric partner" evidence="1">
    <location>
        <position position="113"/>
    </location>
    <ligand>
        <name>substrate</name>
    </ligand>
</feature>
<feature type="binding site" evidence="1">
    <location>
        <position position="163"/>
    </location>
    <ligand>
        <name>substrate</name>
    </ligand>
</feature>
<feature type="binding site" evidence="1">
    <location>
        <position position="167"/>
    </location>
    <ligand>
        <name>substrate</name>
    </ligand>
</feature>
<feature type="binding site" description="via carbamate group" evidence="1">
    <location>
        <position position="191"/>
    </location>
    <ligand>
        <name>Mg(2+)</name>
        <dbReference type="ChEBI" id="CHEBI:18420"/>
    </ligand>
</feature>
<feature type="binding site" evidence="1">
    <location>
        <position position="193"/>
    </location>
    <ligand>
        <name>Mg(2+)</name>
        <dbReference type="ChEBI" id="CHEBI:18420"/>
    </ligand>
</feature>
<feature type="binding site" evidence="1">
    <location>
        <position position="194"/>
    </location>
    <ligand>
        <name>Mg(2+)</name>
        <dbReference type="ChEBI" id="CHEBI:18420"/>
    </ligand>
</feature>
<feature type="binding site" evidence="1">
    <location>
        <position position="285"/>
    </location>
    <ligand>
        <name>substrate</name>
    </ligand>
</feature>
<feature type="binding site" evidence="1">
    <location>
        <position position="317"/>
    </location>
    <ligand>
        <name>substrate</name>
    </ligand>
</feature>
<feature type="binding site" evidence="1">
    <location>
        <position position="369"/>
    </location>
    <ligand>
        <name>substrate</name>
    </ligand>
</feature>
<feature type="site" description="Transition state stabilizer" evidence="1">
    <location>
        <position position="324"/>
    </location>
</feature>
<feature type="modified residue" description="N6,N6,N6-trimethyllysine" evidence="1">
    <location>
        <position position="4"/>
    </location>
</feature>
<feature type="modified residue" description="N6-carboxylysine" evidence="1">
    <location>
        <position position="191"/>
    </location>
</feature>
<feature type="disulfide bond" description="Interchain; in linked form" evidence="1">
    <location>
        <position position="237"/>
    </location>
</feature>
<feature type="non-terminal residue">
    <location>
        <position position="1"/>
    </location>
</feature>
<organism>
    <name type="scientific">Platytheca verticillata</name>
    <dbReference type="NCBI Taxonomy" id="4273"/>
    <lineage>
        <taxon>Eukaryota</taxon>
        <taxon>Viridiplantae</taxon>
        <taxon>Streptophyta</taxon>
        <taxon>Embryophyta</taxon>
        <taxon>Tracheophyta</taxon>
        <taxon>Spermatophyta</taxon>
        <taxon>Magnoliopsida</taxon>
        <taxon>eudicotyledons</taxon>
        <taxon>Gunneridae</taxon>
        <taxon>Pentapetalae</taxon>
        <taxon>rosids</taxon>
        <taxon>fabids</taxon>
        <taxon>Oxalidales</taxon>
        <taxon>Elaeocarpaceae</taxon>
        <taxon>Platytheca</taxon>
    </lineage>
</organism>
<evidence type="ECO:0000255" key="1">
    <source>
        <dbReference type="HAMAP-Rule" id="MF_01338"/>
    </source>
</evidence>
<protein>
    <recommendedName>
        <fullName evidence="1">Ribulose bisphosphate carboxylase large chain</fullName>
        <shortName evidence="1">RuBisCO large subunit</shortName>
        <ecNumber evidence="1">4.1.1.39</ecNumber>
    </recommendedName>
</protein>
<sequence length="465" mass="51621">VGFKAGVKDYKLTYYTPDYETKDTDILAAFRVTPQPGVPPEEAGAAVAAESSTGTWTTVWTDGLTSLDRYKGRCYHIEPVAGEENQFIAYVAYPLDLFEEGSVTNMFTSIVGNVFGFKALRALRLEDLRIPPAYVKTFQGPPHGIQVERDKLNKYGRPLLGCTIKPKLGLSAKNYGRAVYECLRGGLDFTKDDENVNSQPFMRWRDRFLFCAEALYKAQAETGEIKGHYLNATAGTCEEMIKRAVFARELGVPIVMHDYLTGGFTANTSLAHYCRDNGLLLHIHRAMHAVIDRQKNHGIHFRVLAKALRMSGGDHIHSGTVVGKLEGEREITLGFVDLLRDDFIEKDRSRGIYFTQDWVSLPGVLPVASGGIHVWHMPALTEIFGDDSVLQFGGGTLGHPWGNAPGAVANRVALEACVQARNEGRDLAREGNEIIREASKWSPELAAACEVWKEIKFEFEAMDTL</sequence>
<comment type="function">
    <text evidence="1">RuBisCO catalyzes two reactions: the carboxylation of D-ribulose 1,5-bisphosphate, the primary event in carbon dioxide fixation, as well as the oxidative fragmentation of the pentose substrate in the photorespiration process. Both reactions occur simultaneously and in competition at the same active site.</text>
</comment>
<comment type="catalytic activity">
    <reaction evidence="1">
        <text>2 (2R)-3-phosphoglycerate + 2 H(+) = D-ribulose 1,5-bisphosphate + CO2 + H2O</text>
        <dbReference type="Rhea" id="RHEA:23124"/>
        <dbReference type="ChEBI" id="CHEBI:15377"/>
        <dbReference type="ChEBI" id="CHEBI:15378"/>
        <dbReference type="ChEBI" id="CHEBI:16526"/>
        <dbReference type="ChEBI" id="CHEBI:57870"/>
        <dbReference type="ChEBI" id="CHEBI:58272"/>
        <dbReference type="EC" id="4.1.1.39"/>
    </reaction>
</comment>
<comment type="catalytic activity">
    <reaction evidence="1">
        <text>D-ribulose 1,5-bisphosphate + O2 = 2-phosphoglycolate + (2R)-3-phosphoglycerate + 2 H(+)</text>
        <dbReference type="Rhea" id="RHEA:36631"/>
        <dbReference type="ChEBI" id="CHEBI:15378"/>
        <dbReference type="ChEBI" id="CHEBI:15379"/>
        <dbReference type="ChEBI" id="CHEBI:57870"/>
        <dbReference type="ChEBI" id="CHEBI:58033"/>
        <dbReference type="ChEBI" id="CHEBI:58272"/>
    </reaction>
</comment>
<comment type="cofactor">
    <cofactor evidence="1">
        <name>Mg(2+)</name>
        <dbReference type="ChEBI" id="CHEBI:18420"/>
    </cofactor>
    <text evidence="1">Binds 1 Mg(2+) ion per subunit.</text>
</comment>
<comment type="subunit">
    <text evidence="1">Heterohexadecamer of 8 large chains and 8 small chains; disulfide-linked. The disulfide link is formed within the large subunit homodimers.</text>
</comment>
<comment type="subcellular location">
    <subcellularLocation>
        <location>Plastid</location>
        <location>Chloroplast</location>
    </subcellularLocation>
</comment>
<comment type="PTM">
    <text evidence="1">The disulfide bond which can form in the large chain dimeric partners within the hexadecamer appears to be associated with oxidative stress and protein turnover.</text>
</comment>
<comment type="miscellaneous">
    <text evidence="1">The basic functional RuBisCO is composed of a large chain homodimer in a 'head-to-tail' conformation. In form I RuBisCO this homodimer is arranged in a barrel-like tetramer with the small subunits forming a tetrameric 'cap' on each end of the 'barrel'.</text>
</comment>
<comment type="similarity">
    <text evidence="1">Belongs to the RuBisCO large chain family. Type I subfamily.</text>
</comment>
<proteinExistence type="inferred from homology"/>
<reference key="1">
    <citation type="journal article" date="1992" name="Science">
        <title>Carnivorous plants: phylogeny and structural evolution.</title>
        <authorList>
            <person name="Albert V.A."/>
            <person name="Williams S.E."/>
            <person name="Chase M.W."/>
        </authorList>
    </citation>
    <scope>NUCLEOTIDE SEQUENCE [GENOMIC DNA]</scope>
</reference>